<keyword id="KW-0238">DNA-binding</keyword>
<keyword id="KW-1017">Isopeptide bond</keyword>
<keyword id="KW-0479">Metal-binding</keyword>
<keyword id="KW-0539">Nucleus</keyword>
<keyword id="KW-0597">Phosphoprotein</keyword>
<keyword id="KW-1185">Reference proteome</keyword>
<keyword id="KW-0678">Repressor</keyword>
<keyword id="KW-0804">Transcription</keyword>
<keyword id="KW-0805">Transcription regulation</keyword>
<keyword id="KW-0832">Ubl conjugation</keyword>
<keyword id="KW-0862">Zinc</keyword>
<keyword id="KW-0863">Zinc-finger</keyword>
<comment type="function">
    <text evidence="2 3">Transcriptional repressor. Can act with CTBP1 to synergistically repress transcription but CTPBP1 is not essential. Plays an important role in the specification and differentiation of lung epithelium. Acts cooperatively with FOXP4 to regulate lung secretory epithelial cell fate and regeneration by restricting the goblet cell lineage program; the function may involve regulation of AGR2. Essential transcriptional regulator of B-cell development. Involved in regulation of cardiac muscle cell proliferation. Involved in the columnar organization of spinal motor neurons. Promotes the formation of the lateral motor neuron column (LMC) and the preganglionic motor column (PGC) and is required for respective appropriate motor axon projections. The segment-appropriate generation of spinal cord motor columns requires cooperation with other Hox proteins. Can regulate PITX3 promoter activity; may promote midbrain identity in embryonic stem cell-derived dopamine neurons by regulating PITX3. Negatively regulates the differentiation of T follicular helper cells T(FH)s. Involved in maintenance of hair follicle stem cell quiescence; the function probably involves regulation of FGF18. Represses transcription of various pro-apoptotic genes and cooperates with NF-kappa B-signaling in promoting B-cell expansion by inhibition of caspase-dependent apoptosis. Binds to CSF1R promoter elements and is involved in regulation of monocyte differentiation and macrophage functions; repression of CSF1R in monocytes seems to involve NCOR2 as corepressor. Involved in endothelial cell proliferation, tube formation and migration indicative for a role in angiogenesis; the role in neovascularization seems to implicate suppression of SEMA5B. Can negatively regulate androgen receptor signaling (By similarity). Acts as a transcriptional activator of the FBXL7 promoter; this activity is regulated by AURKA (By similarity).</text>
</comment>
<comment type="subunit">
    <text evidence="2 3">Forms homodimers and heterodimers with FOXP2 and FOXP4. Dimerization is required for DNA-binding. Self-associates. Interacts with CTBP1. Interacts with NCOR2 and AR. Interacts with FOXP2 (By similarity). Interacts with TBR1 (By similarity). Interacts with AURKA; this interaction facilitates the phosphorylation of FOXP1, which suppresses the expression of FBXL7 (By similarity). Interacts with ZMYM2 (By similarity).</text>
</comment>
<comment type="subcellular location">
    <subcellularLocation>
        <location evidence="3">Nucleus</location>
    </subcellularLocation>
    <text evidence="3">Not found in the nucleolus.</text>
</comment>
<comment type="domain">
    <text evidence="2">The leucine-zipper is required for dimerization and transcriptional repression.</text>
</comment>
<dbReference type="EMBL" id="BC134525">
    <property type="protein sequence ID" value="AAI34526.1"/>
    <property type="molecule type" value="mRNA"/>
</dbReference>
<dbReference type="RefSeq" id="NP_001077158.1">
    <property type="nucleotide sequence ID" value="NM_001083689.1"/>
</dbReference>
<dbReference type="RefSeq" id="XP_005222715.1">
    <property type="nucleotide sequence ID" value="XM_005222658.5"/>
</dbReference>
<dbReference type="SMR" id="A4IFD2"/>
<dbReference type="FunCoup" id="A4IFD2">
    <property type="interactions" value="1391"/>
</dbReference>
<dbReference type="STRING" id="9913.ENSBTAP00000064949"/>
<dbReference type="PaxDb" id="9913-ENSBTAP00000021993"/>
<dbReference type="GeneID" id="515903"/>
<dbReference type="KEGG" id="bta:515903"/>
<dbReference type="CTD" id="27086"/>
<dbReference type="VEuPathDB" id="HostDB:ENSBTAG00000016533"/>
<dbReference type="eggNOG" id="KOG4385">
    <property type="taxonomic scope" value="Eukaryota"/>
</dbReference>
<dbReference type="HOGENOM" id="CLU_019502_3_1_1"/>
<dbReference type="InParanoid" id="A4IFD2"/>
<dbReference type="OrthoDB" id="5830876at2759"/>
<dbReference type="TreeFam" id="TF326978"/>
<dbReference type="Proteomes" id="UP000009136">
    <property type="component" value="Chromosome 22"/>
</dbReference>
<dbReference type="Bgee" id="ENSBTAG00000016533">
    <property type="expression patterns" value="Expressed in intramuscular adipose tissue and 109 other cell types or tissues"/>
</dbReference>
<dbReference type="GO" id="GO:0005634">
    <property type="term" value="C:nucleus"/>
    <property type="evidence" value="ECO:0000250"/>
    <property type="project" value="UniProtKB"/>
</dbReference>
<dbReference type="GO" id="GO:0001227">
    <property type="term" value="F:DNA-binding transcription repressor activity, RNA polymerase II-specific"/>
    <property type="evidence" value="ECO:0000318"/>
    <property type="project" value="GO_Central"/>
</dbReference>
<dbReference type="GO" id="GO:0000978">
    <property type="term" value="F:RNA polymerase II cis-regulatory region sequence-specific DNA binding"/>
    <property type="evidence" value="ECO:0000318"/>
    <property type="project" value="GO_Central"/>
</dbReference>
<dbReference type="GO" id="GO:0008270">
    <property type="term" value="F:zinc ion binding"/>
    <property type="evidence" value="ECO:0007669"/>
    <property type="project" value="UniProtKB-KW"/>
</dbReference>
<dbReference type="GO" id="GO:0048513">
    <property type="term" value="P:animal organ development"/>
    <property type="evidence" value="ECO:0007669"/>
    <property type="project" value="UniProtKB-ARBA"/>
</dbReference>
<dbReference type="GO" id="GO:0045892">
    <property type="term" value="P:negative regulation of DNA-templated transcription"/>
    <property type="evidence" value="ECO:0000250"/>
    <property type="project" value="UniProtKB"/>
</dbReference>
<dbReference type="GO" id="GO:0006357">
    <property type="term" value="P:regulation of transcription by RNA polymerase II"/>
    <property type="evidence" value="ECO:0000318"/>
    <property type="project" value="GO_Central"/>
</dbReference>
<dbReference type="CDD" id="cd20065">
    <property type="entry name" value="FH_FOXP2"/>
    <property type="match status" value="1"/>
</dbReference>
<dbReference type="FunFam" id="1.20.5.340:FF:000005">
    <property type="entry name" value="Forkhead box P1, isoform CRA_f"/>
    <property type="match status" value="1"/>
</dbReference>
<dbReference type="FunFam" id="1.10.10.10:FF:000010">
    <property type="entry name" value="Forkhead box P2 isoform B"/>
    <property type="match status" value="1"/>
</dbReference>
<dbReference type="Gene3D" id="1.20.5.340">
    <property type="match status" value="1"/>
</dbReference>
<dbReference type="Gene3D" id="1.10.10.10">
    <property type="entry name" value="Winged helix-like DNA-binding domain superfamily/Winged helix DNA-binding domain"/>
    <property type="match status" value="1"/>
</dbReference>
<dbReference type="InterPro" id="IPR047412">
    <property type="entry name" value="FH_FOXP1_P2"/>
</dbReference>
<dbReference type="InterPro" id="IPR001766">
    <property type="entry name" value="Fork_head_dom"/>
</dbReference>
<dbReference type="InterPro" id="IPR050998">
    <property type="entry name" value="FOXP"/>
</dbReference>
<dbReference type="InterPro" id="IPR032354">
    <property type="entry name" value="FOXP-CC"/>
</dbReference>
<dbReference type="InterPro" id="IPR030456">
    <property type="entry name" value="TF_fork_head_CS_2"/>
</dbReference>
<dbReference type="InterPro" id="IPR036388">
    <property type="entry name" value="WH-like_DNA-bd_sf"/>
</dbReference>
<dbReference type="InterPro" id="IPR036390">
    <property type="entry name" value="WH_DNA-bd_sf"/>
</dbReference>
<dbReference type="PANTHER" id="PTHR45796">
    <property type="entry name" value="FORKHEAD BOX P, ISOFORM C"/>
    <property type="match status" value="1"/>
</dbReference>
<dbReference type="PANTHER" id="PTHR45796:SF3">
    <property type="entry name" value="FORKHEAD BOX PROTEIN P1"/>
    <property type="match status" value="1"/>
</dbReference>
<dbReference type="Pfam" id="PF00250">
    <property type="entry name" value="Forkhead"/>
    <property type="match status" value="1"/>
</dbReference>
<dbReference type="Pfam" id="PF16159">
    <property type="entry name" value="FOXP-CC"/>
    <property type="match status" value="1"/>
</dbReference>
<dbReference type="PRINTS" id="PR00053">
    <property type="entry name" value="FORKHEAD"/>
</dbReference>
<dbReference type="SMART" id="SM00339">
    <property type="entry name" value="FH"/>
    <property type="match status" value="1"/>
</dbReference>
<dbReference type="SUPFAM" id="SSF46785">
    <property type="entry name" value="Winged helix' DNA-binding domain"/>
    <property type="match status" value="1"/>
</dbReference>
<dbReference type="PROSITE" id="PS00658">
    <property type="entry name" value="FORK_HEAD_2"/>
    <property type="match status" value="1"/>
</dbReference>
<dbReference type="PROSITE" id="PS50039">
    <property type="entry name" value="FORK_HEAD_3"/>
    <property type="match status" value="1"/>
</dbReference>
<dbReference type="PROSITE" id="PS00028">
    <property type="entry name" value="ZINC_FINGER_C2H2_1"/>
    <property type="match status" value="1"/>
</dbReference>
<sequence length="674" mass="75121">MMQESGTETKSNGSAIQNGSSGGNHLLECGSLREGRSNGETPAVDVGTADLAHVQQQQQALQVARQLLLQQQQQQQVSGLKSPKRNDKQPALQVPVSVAMMTPQVITPQQMQQILQQQVLSPQQLQVLLQQQQALMLQQQQLQEFYKKQQEQLQLQLLQQHAGKQPKEQQQVATQQLAFQQQLLQMQQLQQQHLLSLQRQGLLTIQPGQPALPLQPLTQGMIPTELQQLWKEVTSAHTTEETTGNNHSSLDLTTTCVSSSAPSKTSLIMNPHASTNGQLSVHTPKRESLSHEEHPHSHPLYGHGVCKWPGCEAVCEDFQSFLKHLNSEHALDDRSTAQCRVQMQVVQQLELQLAKDKERLQAMMTHLHVKSTEPKTAPQPLNLVSSVTLSKSASEASPQSLPHTPTTPTAPITPATQGPSVITTTSMHTVGPIRRRYSDKYNVPISSDIAQNQEFYKNAEVRPPFTYASLIRQAILESPEKQLTLNEIYNWFTRMFAYFRRNAATWKNAVRHNLSLHKCFVRVENVKGAVWTVDEVEFQKRRPQKISGNPSLIKNMQTSHAYCTPLNAALQASMAENSIPLYTTASMGNPTLGNLASAIREELNGAMEHTNSNESDSSPGRSPLQAVHPVHVKEEPLDPEEAEGPLSLVTTANHSPDFDHDRDYEDEPVNEDME</sequence>
<name>FOXP1_BOVIN</name>
<feature type="chain" id="PRO_0000294518" description="Forkhead box protein P1">
    <location>
        <begin position="1"/>
        <end position="674"/>
    </location>
</feature>
<feature type="zinc finger region" description="C2H2-type">
    <location>
        <begin position="304"/>
        <end position="329"/>
    </location>
</feature>
<feature type="DNA-binding region" description="Fork-head" evidence="4">
    <location>
        <begin position="462"/>
        <end position="552"/>
    </location>
</feature>
<feature type="region of interest" description="Disordered" evidence="5">
    <location>
        <begin position="1"/>
        <end position="44"/>
    </location>
</feature>
<feature type="region of interest" description="Disordered" evidence="5">
    <location>
        <begin position="269"/>
        <end position="296"/>
    </location>
</feature>
<feature type="region of interest" description="Leucine-zipper">
    <location>
        <begin position="346"/>
        <end position="367"/>
    </location>
</feature>
<feature type="region of interest" description="CTBP1-binding" evidence="1">
    <location>
        <begin position="380"/>
        <end position="384"/>
    </location>
</feature>
<feature type="region of interest" description="Disordered" evidence="5">
    <location>
        <begin position="388"/>
        <end position="427"/>
    </location>
</feature>
<feature type="region of interest" description="Disordered" evidence="5">
    <location>
        <begin position="608"/>
        <end position="674"/>
    </location>
</feature>
<feature type="compositionally biased region" description="Polar residues" evidence="5">
    <location>
        <begin position="1"/>
        <end position="19"/>
    </location>
</feature>
<feature type="compositionally biased region" description="Polar residues" evidence="5">
    <location>
        <begin position="269"/>
        <end position="281"/>
    </location>
</feature>
<feature type="compositionally biased region" description="Basic and acidic residues" evidence="5">
    <location>
        <begin position="284"/>
        <end position="296"/>
    </location>
</feature>
<feature type="compositionally biased region" description="Polar residues" evidence="5">
    <location>
        <begin position="388"/>
        <end position="401"/>
    </location>
</feature>
<feature type="compositionally biased region" description="Low complexity" evidence="5">
    <location>
        <begin position="402"/>
        <end position="419"/>
    </location>
</feature>
<feature type="compositionally biased region" description="Polar residues" evidence="5">
    <location>
        <begin position="609"/>
        <end position="620"/>
    </location>
</feature>
<feature type="compositionally biased region" description="Acidic residues" evidence="5">
    <location>
        <begin position="664"/>
        <end position="674"/>
    </location>
</feature>
<feature type="modified residue" description="Phosphoserine" evidence="3">
    <location>
        <position position="82"/>
    </location>
</feature>
<feature type="modified residue" description="Phosphothreonine" evidence="3">
    <location>
        <position position="650"/>
    </location>
</feature>
<feature type="modified residue" description="Phosphoserine" evidence="3">
    <location>
        <position position="655"/>
    </location>
</feature>
<feature type="cross-link" description="Glycyl lysine isopeptide (Lys-Gly) (interchain with G-Cter in SUMO2)" evidence="3">
    <location>
        <position position="285"/>
    </location>
</feature>
<feature type="cross-link" description="Glycyl lysine isopeptide (Lys-Gly) (interchain with G-Cter in SUMO2)" evidence="3">
    <location>
        <position position="370"/>
    </location>
</feature>
<feature type="cross-link" description="Glycyl lysine isopeptide (Lys-Gly) (interchain with G-Cter in SUMO2)" evidence="3">
    <location>
        <position position="375"/>
    </location>
</feature>
<feature type="cross-link" description="Glycyl lysine isopeptide (Lys-Gly) (interchain with G-Cter in SUMO2)" evidence="3">
    <location>
        <position position="440"/>
    </location>
</feature>
<reference key="1">
    <citation type="submission" date="2007-03" db="EMBL/GenBank/DDBJ databases">
        <authorList>
            <consortium name="NIH - Mammalian Gene Collection (MGC) project"/>
        </authorList>
    </citation>
    <scope>NUCLEOTIDE SEQUENCE [LARGE SCALE MRNA]</scope>
    <source>
        <strain>Hereford</strain>
        <tissue>Ascending colon</tissue>
    </source>
</reference>
<proteinExistence type="evidence at transcript level"/>
<evidence type="ECO:0000250" key="1"/>
<evidence type="ECO:0000250" key="2">
    <source>
        <dbReference type="UniProtKB" id="P58462"/>
    </source>
</evidence>
<evidence type="ECO:0000250" key="3">
    <source>
        <dbReference type="UniProtKB" id="Q9H334"/>
    </source>
</evidence>
<evidence type="ECO:0000255" key="4">
    <source>
        <dbReference type="PROSITE-ProRule" id="PRU00089"/>
    </source>
</evidence>
<evidence type="ECO:0000256" key="5">
    <source>
        <dbReference type="SAM" id="MobiDB-lite"/>
    </source>
</evidence>
<accession>A4IFD2</accession>
<gene>
    <name type="primary">FOXP1</name>
</gene>
<organism>
    <name type="scientific">Bos taurus</name>
    <name type="common">Bovine</name>
    <dbReference type="NCBI Taxonomy" id="9913"/>
    <lineage>
        <taxon>Eukaryota</taxon>
        <taxon>Metazoa</taxon>
        <taxon>Chordata</taxon>
        <taxon>Craniata</taxon>
        <taxon>Vertebrata</taxon>
        <taxon>Euteleostomi</taxon>
        <taxon>Mammalia</taxon>
        <taxon>Eutheria</taxon>
        <taxon>Laurasiatheria</taxon>
        <taxon>Artiodactyla</taxon>
        <taxon>Ruminantia</taxon>
        <taxon>Pecora</taxon>
        <taxon>Bovidae</taxon>
        <taxon>Bovinae</taxon>
        <taxon>Bos</taxon>
    </lineage>
</organism>
<protein>
    <recommendedName>
        <fullName>Forkhead box protein P1</fullName>
    </recommendedName>
</protein>